<comment type="function">
    <text evidence="3 4 5 6 9">Aldo-keto reductase; part of the gene clusters that mediate the biosynthesis of the host-selective toxins (HSTs) AF-toxins responsible for Alternaria black spot of strawberry disease by the strawberry pathotype (PubMed:12019223). AF-toxin I and III are valine derivatives of 2,3-dyhydroxy-isovaleric acid and 2-hydroxy-isovaleric acid respectively, while AF II is an isoleucine derivative of 2-hydroxy-valeric acid (PubMed:15066029, PubMed:22846083, Ref.3). These derivatives are bound to a 9,10-epoxy-8-hydroxy-9-methyl-decatrienoic acid (EDA) moiety (PubMed:15066029, PubMed:22846083, Ref.3). On cellular level, AF-toxins affect plasma membrane of susceptible cells and cause a sudden increase in loss of K(+) after a few minutes of toxin treatment (PubMed:22846083). The aldo-keto reductase AFTS1 catalyzes the conversion of 2-keto-isovaleric acid (2-KIV) to 2-hydroxy-isovaleric acid (2-HIV) by reduction of its ketone to an alcohol (PubMed:15066029). The acyl-CoA ligase AFT1, the hydrolase AFT2 and the enoyl-CoA hydratases AFT3 and AFT6, but also the polyketide synthase AFT9, the acyl-CoA dehydrogenase AFT10, the cytochrome P450 monooxygenase AFT11 and the oxidoreductase AFT12 are all involved in the biosynthesis of the AK-, AF- and ACT-toxin common EDA structural moiety (PubMed:12019223, PubMed:18986255, Ref.3). The exact function of each enzyme, and of additional enzymes identified within the AF-toxin clusters have still to be determined (PubMed:12019223, PubMed:18986255, Ref.3).</text>
</comment>
<comment type="pathway">
    <text evidence="4">Mycotoxin biosynthesis.</text>
</comment>
<comment type="disruption phenotype">
    <text evidence="4">Abolished the production of AF-toxin I, but not AF-toxin II (PubMed:15066029). Impairs the pathogenicity to strawberry (PubMed:15066029).</text>
</comment>
<comment type="miscellaneous">
    <text evidence="3">Gene clusters encoding host-selective toxins (HSTs) are localized on conditionally dispensable chromosomes (CDCs), also called supernumerary chromosomes, where they are present in multiple copies (PubMed:12019223). The CDCs are not essential for saprophytic growth but controls host-selective pathogenicity (PubMed:12019223).</text>
</comment>
<comment type="similarity">
    <text evidence="10">Belongs to the aldo/keto reductase family.</text>
</comment>
<evidence type="ECO:0000250" key="1">
    <source>
        <dbReference type="UniProtKB" id="O43488"/>
    </source>
</evidence>
<evidence type="ECO:0000250" key="2">
    <source>
        <dbReference type="UniProtKB" id="Q8CG76"/>
    </source>
</evidence>
<evidence type="ECO:0000269" key="3">
    <source>
    </source>
</evidence>
<evidence type="ECO:0000269" key="4">
    <source>
    </source>
</evidence>
<evidence type="ECO:0000269" key="5">
    <source>
    </source>
</evidence>
<evidence type="ECO:0000269" key="6">
    <source ref="3"/>
</evidence>
<evidence type="ECO:0000303" key="7">
    <source>
    </source>
</evidence>
<evidence type="ECO:0000303" key="8">
    <source>
    </source>
</evidence>
<evidence type="ECO:0000303" key="9">
    <source>
    </source>
</evidence>
<evidence type="ECO:0000305" key="10"/>
<evidence type="ECO:0000305" key="11">
    <source>
    </source>
</evidence>
<dbReference type="EC" id="1.1.1.-" evidence="11"/>
<dbReference type="EMBL" id="AB119280">
    <property type="protein sequence ID" value="BAC84993.1"/>
    <property type="molecule type" value="Genomic_DNA"/>
</dbReference>
<dbReference type="SMR" id="Q75ZG3"/>
<dbReference type="VEuPathDB" id="FungiDB:CC77DRAFT_963664"/>
<dbReference type="GO" id="GO:0016491">
    <property type="term" value="F:oxidoreductase activity"/>
    <property type="evidence" value="ECO:0007669"/>
    <property type="project" value="UniProtKB-KW"/>
</dbReference>
<dbReference type="CDD" id="cd19079">
    <property type="entry name" value="AKR_EcYajO-like"/>
    <property type="match status" value="1"/>
</dbReference>
<dbReference type="FunFam" id="3.20.20.100:FF:000004">
    <property type="entry name" value="Oxidoreductase, aldo/keto reductase"/>
    <property type="match status" value="1"/>
</dbReference>
<dbReference type="Gene3D" id="3.20.20.100">
    <property type="entry name" value="NADP-dependent oxidoreductase domain"/>
    <property type="match status" value="1"/>
</dbReference>
<dbReference type="InterPro" id="IPR050523">
    <property type="entry name" value="AKR_Detox_Biosynth"/>
</dbReference>
<dbReference type="InterPro" id="IPR023210">
    <property type="entry name" value="NADP_OxRdtase_dom"/>
</dbReference>
<dbReference type="InterPro" id="IPR036812">
    <property type="entry name" value="NADP_OxRdtase_dom_sf"/>
</dbReference>
<dbReference type="PANTHER" id="PTHR43364">
    <property type="entry name" value="NADH-SPECIFIC METHYLGLYOXAL REDUCTASE-RELATED"/>
    <property type="match status" value="1"/>
</dbReference>
<dbReference type="PANTHER" id="PTHR43364:SF9">
    <property type="entry name" value="OXIDOREDUCTASE"/>
    <property type="match status" value="1"/>
</dbReference>
<dbReference type="Pfam" id="PF00248">
    <property type="entry name" value="Aldo_ket_red"/>
    <property type="match status" value="1"/>
</dbReference>
<dbReference type="SUPFAM" id="SSF51430">
    <property type="entry name" value="NAD(P)-linked oxidoreductase"/>
    <property type="match status" value="1"/>
</dbReference>
<gene>
    <name evidence="8" type="primary">AFTS1</name>
    <name evidence="7" type="synonym">ORFS1</name>
</gene>
<feature type="chain" id="PRO_0000444817" description="Aldo-keto reductase AFTS1">
    <location>
        <begin position="1"/>
        <end position="366"/>
    </location>
</feature>
<feature type="active site" description="Proton donor" evidence="2">
    <location>
        <position position="80"/>
    </location>
</feature>
<feature type="binding site" evidence="1">
    <location>
        <position position="75"/>
    </location>
    <ligand>
        <name>NADP(+)</name>
        <dbReference type="ChEBI" id="CHEBI:58349"/>
    </ligand>
</feature>
<feature type="binding site" evidence="2">
    <location>
        <position position="172"/>
    </location>
    <ligand>
        <name>substrate</name>
    </ligand>
</feature>
<feature type="binding site" evidence="1">
    <location>
        <begin position="202"/>
        <end position="203"/>
    </location>
    <ligand>
        <name>NADP(+)</name>
        <dbReference type="ChEBI" id="CHEBI:58349"/>
    </ligand>
</feature>
<feature type="binding site" evidence="1">
    <location>
        <position position="228"/>
    </location>
    <ligand>
        <name>NADP(+)</name>
        <dbReference type="ChEBI" id="CHEBI:58349"/>
    </ligand>
</feature>
<feature type="binding site" evidence="1">
    <location>
        <begin position="257"/>
        <end position="267"/>
    </location>
    <ligand>
        <name>NADP(+)</name>
        <dbReference type="ChEBI" id="CHEBI:58349"/>
    </ligand>
</feature>
<feature type="binding site" evidence="1">
    <location>
        <begin position="329"/>
        <end position="337"/>
    </location>
    <ligand>
        <name>NADP(+)</name>
        <dbReference type="ChEBI" id="CHEBI:58349"/>
    </ligand>
</feature>
<reference key="1">
    <citation type="journal article" date="2002" name="Genetics">
        <title>A conditionally dispensable chromosome controls host-specific pathogenicity in the fungal plant pathogen Alternaria alternata.</title>
        <authorList>
            <person name="Hatta R."/>
            <person name="Ito K."/>
            <person name="Hosaki Y."/>
            <person name="Tanaka T."/>
            <person name="Tanaka A."/>
            <person name="Yamamoto M."/>
            <person name="Akimitsu K."/>
            <person name="Tsuge T."/>
        </authorList>
    </citation>
    <scope>NUCLEOTIDE SEQUENCE [GENOMIC DNA]</scope>
    <source>
        <strain>NAF8</strain>
    </source>
</reference>
<reference key="2">
    <citation type="journal article" date="2004" name="Mol. Microbiol.">
        <title>Dissection of the host range of the fungal plant pathogen Alternaria alternata by modification of secondary metabolism.</title>
        <authorList>
            <person name="Ito K."/>
            <person name="Tanaka T."/>
            <person name="Hatta R."/>
            <person name="Yamamoto M."/>
            <person name="Akimitsu K."/>
            <person name="Tsuge T."/>
        </authorList>
    </citation>
    <scope>NUCLEOTIDE SEQUENCE [GENOMIC DNA]</scope>
    <scope>FUNCTION</scope>
    <scope>DISRUPTION PHENOTYPE</scope>
    <scope>PATHWAY</scope>
    <source>
        <strain>NAF8</strain>
    </source>
</reference>
<reference key="3">
    <citation type="journal article" date="2005" name="J. Gen. Plant Pathol.">
        <title>Structural analysis of cosmid clone pcAFT-2 carrying AFT10-1 encoding an acyl-CoA dehydrogenase involved in AF-toxin production in the strawberry pathotype of Alternaria alternata.</title>
        <authorList>
            <person name="Ruswandi S."/>
            <person name="Kitani K."/>
            <person name="Akimitsu K."/>
            <person name="Tsuge T."/>
            <person name="Shiraishi T."/>
            <person name="Yamamoto M."/>
        </authorList>
    </citation>
    <scope>FUNCTION</scope>
    <source>
        <strain>NAF8</strain>
    </source>
</reference>
<reference key="4">
    <citation type="journal article" date="2008" name="Mol. Plant Microbe Interact.">
        <title>Functional analysis of a multicopy host-selective ACT-toxin biosynthesis gene in the tangerine pathotype of Alternaria alternata using RNA silencing.</title>
        <authorList>
            <person name="Miyamoto Y."/>
            <person name="Masunaka A."/>
            <person name="Tsuge T."/>
            <person name="Yamamoto M."/>
            <person name="Ohtani K."/>
            <person name="Fukumoto T."/>
            <person name="Gomi K."/>
            <person name="Peever T.L."/>
            <person name="Akimitsu K."/>
        </authorList>
    </citation>
    <scope>FUNCTION</scope>
    <source>
        <strain>NAF8</strain>
    </source>
</reference>
<reference key="5">
    <citation type="journal article" date="2013" name="FEMS Microbiol. Rev.">
        <title>Host-selective toxins produced by the plant pathogenic fungus Alternaria alternata.</title>
        <authorList>
            <person name="Tsuge T."/>
            <person name="Harimoto Y."/>
            <person name="Akimitsu K."/>
            <person name="Ohtani K."/>
            <person name="Kodama M."/>
            <person name="Akagi Y."/>
            <person name="Egusa M."/>
            <person name="Yamamoto M."/>
            <person name="Otani H."/>
        </authorList>
    </citation>
    <scope>REVIEW ON HOST-SELECTIVE TOXINS</scope>
</reference>
<organism>
    <name type="scientific">Alternaria alternata</name>
    <name type="common">Alternaria rot fungus</name>
    <name type="synonym">Torula alternata</name>
    <dbReference type="NCBI Taxonomy" id="5599"/>
    <lineage>
        <taxon>Eukaryota</taxon>
        <taxon>Fungi</taxon>
        <taxon>Dikarya</taxon>
        <taxon>Ascomycota</taxon>
        <taxon>Pezizomycotina</taxon>
        <taxon>Dothideomycetes</taxon>
        <taxon>Pleosporomycetidae</taxon>
        <taxon>Pleosporales</taxon>
        <taxon>Pleosporineae</taxon>
        <taxon>Pleosporaceae</taxon>
        <taxon>Alternaria</taxon>
        <taxon>Alternaria sect. Alternaria</taxon>
        <taxon>Alternaria alternata complex</taxon>
    </lineage>
</organism>
<protein>
    <recommendedName>
        <fullName evidence="8">Aldo-keto reductase AFTS1</fullName>
        <ecNumber evidence="11">1.1.1.-</ecNumber>
    </recommendedName>
    <alternativeName>
        <fullName evidence="8">AF-toxin biosynthesis protein S1</fullName>
    </alternativeName>
</protein>
<keyword id="KW-0521">NADP</keyword>
<keyword id="KW-0560">Oxidoreductase</keyword>
<keyword id="KW-0843">Virulence</keyword>
<accession>Q75ZG3</accession>
<proteinExistence type="inferred from homology"/>
<sequence length="366" mass="41392">MNYEKWRHPPVSLVESVKASRAVYKRLGNSGLVVSNPILGGMHIGNPKWNDWVLDEKESIALLKAAYERGVNTWDTANMYSNGESEKIMGKALRVHNIPRSKVVIMTKCCRAVTDPNIEPDIGISTAFYPELSGQSKDYVNHFGLSRASIFQQVEASLQRLNTDYIDVLQIHRFDPEVPPEETMKALHDLVQMNKVRYLGASSMWAHEFAILQHAAEKNNWTKFVSMQNHYSLLYREEEREMIKYCNLTGVGVISWGSLASGRLARPPDQRTVSPRGVNGTIYKDYNPTQSEEIIRRVHQTAVSRGIPMSQVALAWLNKRIVAPVIGLSSVERIDEALDAKAVELSHEEERYLESAYRAQSIQGHA</sequence>
<name>AFTS1_ALTAL</name>